<dbReference type="EMBL" id="CP001227">
    <property type="protein sequence ID" value="ACR47209.1"/>
    <property type="molecule type" value="Genomic_DNA"/>
</dbReference>
<dbReference type="RefSeq" id="WP_004996373.1">
    <property type="nucleotide sequence ID" value="NC_012730.1"/>
</dbReference>
<dbReference type="SMR" id="C4K0V8"/>
<dbReference type="GeneID" id="95361999"/>
<dbReference type="KEGG" id="rpk:RPR_01660"/>
<dbReference type="HOGENOM" id="CLU_082184_2_0_5"/>
<dbReference type="Proteomes" id="UP000005015">
    <property type="component" value="Chromosome"/>
</dbReference>
<dbReference type="GO" id="GO:0022625">
    <property type="term" value="C:cytosolic large ribosomal subunit"/>
    <property type="evidence" value="ECO:0007669"/>
    <property type="project" value="TreeGrafter"/>
</dbReference>
<dbReference type="GO" id="GO:0003729">
    <property type="term" value="F:mRNA binding"/>
    <property type="evidence" value="ECO:0007669"/>
    <property type="project" value="TreeGrafter"/>
</dbReference>
<dbReference type="GO" id="GO:0003735">
    <property type="term" value="F:structural constituent of ribosome"/>
    <property type="evidence" value="ECO:0007669"/>
    <property type="project" value="InterPro"/>
</dbReference>
<dbReference type="GO" id="GO:0017148">
    <property type="term" value="P:negative regulation of translation"/>
    <property type="evidence" value="ECO:0007669"/>
    <property type="project" value="TreeGrafter"/>
</dbReference>
<dbReference type="GO" id="GO:0006412">
    <property type="term" value="P:translation"/>
    <property type="evidence" value="ECO:0007669"/>
    <property type="project" value="UniProtKB-UniRule"/>
</dbReference>
<dbReference type="CDD" id="cd00392">
    <property type="entry name" value="Ribosomal_L13"/>
    <property type="match status" value="1"/>
</dbReference>
<dbReference type="Gene3D" id="3.90.1180.10">
    <property type="entry name" value="Ribosomal protein L13"/>
    <property type="match status" value="1"/>
</dbReference>
<dbReference type="HAMAP" id="MF_01366">
    <property type="entry name" value="Ribosomal_uL13"/>
    <property type="match status" value="1"/>
</dbReference>
<dbReference type="InterPro" id="IPR005822">
    <property type="entry name" value="Ribosomal_uL13"/>
</dbReference>
<dbReference type="InterPro" id="IPR005823">
    <property type="entry name" value="Ribosomal_uL13_bac-type"/>
</dbReference>
<dbReference type="InterPro" id="IPR023563">
    <property type="entry name" value="Ribosomal_uL13_CS"/>
</dbReference>
<dbReference type="InterPro" id="IPR036899">
    <property type="entry name" value="Ribosomal_uL13_sf"/>
</dbReference>
<dbReference type="NCBIfam" id="TIGR01066">
    <property type="entry name" value="rplM_bact"/>
    <property type="match status" value="1"/>
</dbReference>
<dbReference type="PANTHER" id="PTHR11545:SF2">
    <property type="entry name" value="LARGE RIBOSOMAL SUBUNIT PROTEIN UL13M"/>
    <property type="match status" value="1"/>
</dbReference>
<dbReference type="PANTHER" id="PTHR11545">
    <property type="entry name" value="RIBOSOMAL PROTEIN L13"/>
    <property type="match status" value="1"/>
</dbReference>
<dbReference type="Pfam" id="PF00572">
    <property type="entry name" value="Ribosomal_L13"/>
    <property type="match status" value="1"/>
</dbReference>
<dbReference type="PIRSF" id="PIRSF002181">
    <property type="entry name" value="Ribosomal_L13"/>
    <property type="match status" value="1"/>
</dbReference>
<dbReference type="SUPFAM" id="SSF52161">
    <property type="entry name" value="Ribosomal protein L13"/>
    <property type="match status" value="1"/>
</dbReference>
<dbReference type="PROSITE" id="PS00783">
    <property type="entry name" value="RIBOSOMAL_L13"/>
    <property type="match status" value="1"/>
</dbReference>
<reference key="1">
    <citation type="journal article" date="2009" name="PLoS ONE">
        <title>Genome sequence of the endosymbiont Rickettsia peacockii and comparison with virulent Rickettsia rickettsii: identification of virulence factors.</title>
        <authorList>
            <person name="Felsheim R.F."/>
            <person name="Kurtti T.J."/>
            <person name="Munderloh U.G."/>
        </authorList>
    </citation>
    <scope>NUCLEOTIDE SEQUENCE [LARGE SCALE GENOMIC DNA]</scope>
    <source>
        <strain>Rustic</strain>
    </source>
</reference>
<keyword id="KW-0687">Ribonucleoprotein</keyword>
<keyword id="KW-0689">Ribosomal protein</keyword>
<feature type="chain" id="PRO_1000214964" description="Large ribosomal subunit protein uL13">
    <location>
        <begin position="1"/>
        <end position="155"/>
    </location>
</feature>
<evidence type="ECO:0000255" key="1">
    <source>
        <dbReference type="HAMAP-Rule" id="MF_01366"/>
    </source>
</evidence>
<evidence type="ECO:0000305" key="2"/>
<gene>
    <name evidence="1" type="primary">rplM</name>
    <name type="ordered locus">RPR_01660</name>
</gene>
<sequence length="155" mass="17405">MKTYSAKPSEIEKKWWVIDAKNIVLGRLASRVANMLRGKHKPSFTPHLDCGDNIIIINAEHVKLTGKKANPKDGKIYYRYTGFPGGIKDTTAGKILSGKHPERVIKMAVKRMITRNALGAKQMSNLYVYANGDHPHMAQQPTVYDFASQNPKNKK</sequence>
<protein>
    <recommendedName>
        <fullName evidence="1">Large ribosomal subunit protein uL13</fullName>
    </recommendedName>
    <alternativeName>
        <fullName evidence="2">50S ribosomal protein L13</fullName>
    </alternativeName>
</protein>
<comment type="function">
    <text evidence="1">This protein is one of the early assembly proteins of the 50S ribosomal subunit, although it is not seen to bind rRNA by itself. It is important during the early stages of 50S assembly.</text>
</comment>
<comment type="subunit">
    <text evidence="1">Part of the 50S ribosomal subunit.</text>
</comment>
<comment type="similarity">
    <text evidence="1">Belongs to the universal ribosomal protein uL13 family.</text>
</comment>
<name>RL13_RICPU</name>
<proteinExistence type="inferred from homology"/>
<organism>
    <name type="scientific">Rickettsia peacockii (strain Rustic)</name>
    <dbReference type="NCBI Taxonomy" id="562019"/>
    <lineage>
        <taxon>Bacteria</taxon>
        <taxon>Pseudomonadati</taxon>
        <taxon>Pseudomonadota</taxon>
        <taxon>Alphaproteobacteria</taxon>
        <taxon>Rickettsiales</taxon>
        <taxon>Rickettsiaceae</taxon>
        <taxon>Rickettsieae</taxon>
        <taxon>Rickettsia</taxon>
        <taxon>spotted fever group</taxon>
    </lineage>
</organism>
<accession>C4K0V8</accession>